<organism>
    <name type="scientific">Brucella melitensis biotype 1 (strain ATCC 23456 / CCUG 17765 / NCTC 10094 / 16M)</name>
    <dbReference type="NCBI Taxonomy" id="224914"/>
    <lineage>
        <taxon>Bacteria</taxon>
        <taxon>Pseudomonadati</taxon>
        <taxon>Pseudomonadota</taxon>
        <taxon>Alphaproteobacteria</taxon>
        <taxon>Hyphomicrobiales</taxon>
        <taxon>Brucellaceae</taxon>
        <taxon>Brucella/Ochrobactrum group</taxon>
        <taxon>Brucella</taxon>
    </lineage>
</organism>
<proteinExistence type="inferred from homology"/>
<protein>
    <recommendedName>
        <fullName evidence="1">Ribosomal RNA small subunit methyltransferase A</fullName>
        <ecNumber evidence="1">2.1.1.182</ecNumber>
    </recommendedName>
    <alternativeName>
        <fullName evidence="1">16S rRNA (adenine(1518)-N(6)/adenine(1519)-N(6))-dimethyltransferase</fullName>
    </alternativeName>
    <alternativeName>
        <fullName evidence="1">16S rRNA dimethyladenosine transferase</fullName>
    </alternativeName>
    <alternativeName>
        <fullName evidence="1">16S rRNA dimethylase</fullName>
    </alternativeName>
    <alternativeName>
        <fullName evidence="1">S-adenosylmethionine-6-N', N'-adenosyl(rRNA) dimethyltransferase</fullName>
    </alternativeName>
</protein>
<name>RSMA_BRUME</name>
<reference key="1">
    <citation type="journal article" date="2002" name="Proc. Natl. Acad. Sci. U.S.A.">
        <title>The genome sequence of the facultative intracellular pathogen Brucella melitensis.</title>
        <authorList>
            <person name="DelVecchio V.G."/>
            <person name="Kapatral V."/>
            <person name="Redkar R.J."/>
            <person name="Patra G."/>
            <person name="Mujer C."/>
            <person name="Los T."/>
            <person name="Ivanova N."/>
            <person name="Anderson I."/>
            <person name="Bhattacharyya A."/>
            <person name="Lykidis A."/>
            <person name="Reznik G."/>
            <person name="Jablonski L."/>
            <person name="Larsen N."/>
            <person name="D'Souza M."/>
            <person name="Bernal A."/>
            <person name="Mazur M."/>
            <person name="Goltsman E."/>
            <person name="Selkov E."/>
            <person name="Elzer P.H."/>
            <person name="Hagius S."/>
            <person name="O'Callaghan D."/>
            <person name="Letesson J.-J."/>
            <person name="Haselkorn R."/>
            <person name="Kyrpides N.C."/>
            <person name="Overbeek R."/>
        </authorList>
    </citation>
    <scope>NUCLEOTIDE SEQUENCE [LARGE SCALE GENOMIC DNA]</scope>
    <source>
        <strain>ATCC 23456 / CCUG 17765 / NCTC 10094 / 16M</strain>
    </source>
</reference>
<accession>Q8YG94</accession>
<sequence length="276" mass="30322">MSIDSLPPLREVIERHDLMPKKSLGQNFLFDLNLTSKIARQAGDLRDQPVIEVGPGPGGLTRALLAQGAYVTAIERDDRCLEALAEIAAHYPGRLRIIAGDALEQDFTALFPEGPKPRIVANLPYNVGTQLLLNWLLVEPWPPFYSSMTLMFQREVAERIVAKLDSDHYGRLGVLAGWRTQAKIAFDVPPQAFTPPPKVMSSVVHIVPRETPLPCRAEALGQITQAAFGQRRKMLRQSLKSIGGAALLEKTGIDGTRRAETLSVEEFVALANACLP</sequence>
<feature type="chain" id="PRO_0000101497" description="Ribosomal RNA small subunit methyltransferase A">
    <location>
        <begin position="1"/>
        <end position="276"/>
    </location>
</feature>
<feature type="binding site" evidence="1">
    <location>
        <position position="27"/>
    </location>
    <ligand>
        <name>S-adenosyl-L-methionine</name>
        <dbReference type="ChEBI" id="CHEBI:59789"/>
    </ligand>
</feature>
<feature type="binding site" evidence="1">
    <location>
        <position position="29"/>
    </location>
    <ligand>
        <name>S-adenosyl-L-methionine</name>
        <dbReference type="ChEBI" id="CHEBI:59789"/>
    </ligand>
</feature>
<feature type="binding site" evidence="1">
    <location>
        <position position="54"/>
    </location>
    <ligand>
        <name>S-adenosyl-L-methionine</name>
        <dbReference type="ChEBI" id="CHEBI:59789"/>
    </ligand>
</feature>
<feature type="binding site" evidence="1">
    <location>
        <position position="75"/>
    </location>
    <ligand>
        <name>S-adenosyl-L-methionine</name>
        <dbReference type="ChEBI" id="CHEBI:59789"/>
    </ligand>
</feature>
<feature type="binding site" evidence="1">
    <location>
        <position position="101"/>
    </location>
    <ligand>
        <name>S-adenosyl-L-methionine</name>
        <dbReference type="ChEBI" id="CHEBI:59789"/>
    </ligand>
</feature>
<feature type="binding site" evidence="1">
    <location>
        <position position="122"/>
    </location>
    <ligand>
        <name>S-adenosyl-L-methionine</name>
        <dbReference type="ChEBI" id="CHEBI:59789"/>
    </ligand>
</feature>
<evidence type="ECO:0000255" key="1">
    <source>
        <dbReference type="HAMAP-Rule" id="MF_00607"/>
    </source>
</evidence>
<dbReference type="EC" id="2.1.1.182" evidence="1"/>
<dbReference type="EMBL" id="AE008917">
    <property type="protein sequence ID" value="AAL52448.1"/>
    <property type="molecule type" value="Genomic_DNA"/>
</dbReference>
<dbReference type="PIR" id="AE3410">
    <property type="entry name" value="AE3410"/>
</dbReference>
<dbReference type="RefSeq" id="WP_004683426.1">
    <property type="nucleotide sequence ID" value="NC_003317.1"/>
</dbReference>
<dbReference type="SMR" id="Q8YG94"/>
<dbReference type="GeneID" id="29594115"/>
<dbReference type="KEGG" id="bme:BMEI1267"/>
<dbReference type="KEGG" id="bmel:DK63_138"/>
<dbReference type="PATRIC" id="fig|224914.52.peg.143"/>
<dbReference type="eggNOG" id="COG0030">
    <property type="taxonomic scope" value="Bacteria"/>
</dbReference>
<dbReference type="PhylomeDB" id="Q8YG94"/>
<dbReference type="Proteomes" id="UP000000419">
    <property type="component" value="Chromosome I"/>
</dbReference>
<dbReference type="GO" id="GO:0005829">
    <property type="term" value="C:cytosol"/>
    <property type="evidence" value="ECO:0007669"/>
    <property type="project" value="TreeGrafter"/>
</dbReference>
<dbReference type="GO" id="GO:0052908">
    <property type="term" value="F:16S rRNA (adenine(1518)-N(6)/adenine(1519)-N(6))-dimethyltransferase activity"/>
    <property type="evidence" value="ECO:0007669"/>
    <property type="project" value="UniProtKB-EC"/>
</dbReference>
<dbReference type="GO" id="GO:0003723">
    <property type="term" value="F:RNA binding"/>
    <property type="evidence" value="ECO:0007669"/>
    <property type="project" value="UniProtKB-KW"/>
</dbReference>
<dbReference type="CDD" id="cd02440">
    <property type="entry name" value="AdoMet_MTases"/>
    <property type="match status" value="1"/>
</dbReference>
<dbReference type="FunFam" id="1.10.8.100:FF:000001">
    <property type="entry name" value="Ribosomal RNA small subunit methyltransferase A"/>
    <property type="match status" value="1"/>
</dbReference>
<dbReference type="Gene3D" id="1.10.8.100">
    <property type="entry name" value="Ribosomal RNA adenine dimethylase-like, domain 2"/>
    <property type="match status" value="1"/>
</dbReference>
<dbReference type="Gene3D" id="3.40.50.150">
    <property type="entry name" value="Vaccinia Virus protein VP39"/>
    <property type="match status" value="1"/>
</dbReference>
<dbReference type="HAMAP" id="MF_00607">
    <property type="entry name" value="16SrRNA_methyltr_A"/>
    <property type="match status" value="1"/>
</dbReference>
<dbReference type="InterPro" id="IPR001737">
    <property type="entry name" value="KsgA/Erm"/>
</dbReference>
<dbReference type="InterPro" id="IPR023165">
    <property type="entry name" value="rRNA_Ade_diMease-like_C"/>
</dbReference>
<dbReference type="InterPro" id="IPR020596">
    <property type="entry name" value="rRNA_Ade_Mease_Trfase_CS"/>
</dbReference>
<dbReference type="InterPro" id="IPR020598">
    <property type="entry name" value="rRNA_Ade_methylase_Trfase_N"/>
</dbReference>
<dbReference type="InterPro" id="IPR011530">
    <property type="entry name" value="rRNA_adenine_dimethylase"/>
</dbReference>
<dbReference type="InterPro" id="IPR029063">
    <property type="entry name" value="SAM-dependent_MTases_sf"/>
</dbReference>
<dbReference type="NCBIfam" id="TIGR00755">
    <property type="entry name" value="ksgA"/>
    <property type="match status" value="1"/>
</dbReference>
<dbReference type="PANTHER" id="PTHR11727">
    <property type="entry name" value="DIMETHYLADENOSINE TRANSFERASE"/>
    <property type="match status" value="1"/>
</dbReference>
<dbReference type="PANTHER" id="PTHR11727:SF7">
    <property type="entry name" value="DIMETHYLADENOSINE TRANSFERASE-RELATED"/>
    <property type="match status" value="1"/>
</dbReference>
<dbReference type="Pfam" id="PF00398">
    <property type="entry name" value="RrnaAD"/>
    <property type="match status" value="1"/>
</dbReference>
<dbReference type="SMART" id="SM00650">
    <property type="entry name" value="rADc"/>
    <property type="match status" value="1"/>
</dbReference>
<dbReference type="SUPFAM" id="SSF53335">
    <property type="entry name" value="S-adenosyl-L-methionine-dependent methyltransferases"/>
    <property type="match status" value="1"/>
</dbReference>
<dbReference type="PROSITE" id="PS01131">
    <property type="entry name" value="RRNA_A_DIMETH"/>
    <property type="match status" value="1"/>
</dbReference>
<dbReference type="PROSITE" id="PS51689">
    <property type="entry name" value="SAM_RNA_A_N6_MT"/>
    <property type="match status" value="1"/>
</dbReference>
<keyword id="KW-0963">Cytoplasm</keyword>
<keyword id="KW-0489">Methyltransferase</keyword>
<keyword id="KW-0694">RNA-binding</keyword>
<keyword id="KW-0698">rRNA processing</keyword>
<keyword id="KW-0949">S-adenosyl-L-methionine</keyword>
<keyword id="KW-0808">Transferase</keyword>
<gene>
    <name evidence="1" type="primary">rsmA</name>
    <name evidence="1" type="synonym">ksgA</name>
    <name type="ordered locus">BMEI1267</name>
</gene>
<comment type="function">
    <text evidence="1">Specifically dimethylates two adjacent adenosines (A1518 and A1519) in the loop of a conserved hairpin near the 3'-end of 16S rRNA in the 30S particle. May play a critical role in biogenesis of 30S subunits.</text>
</comment>
<comment type="catalytic activity">
    <reaction evidence="1">
        <text>adenosine(1518)/adenosine(1519) in 16S rRNA + 4 S-adenosyl-L-methionine = N(6)-dimethyladenosine(1518)/N(6)-dimethyladenosine(1519) in 16S rRNA + 4 S-adenosyl-L-homocysteine + 4 H(+)</text>
        <dbReference type="Rhea" id="RHEA:19609"/>
        <dbReference type="Rhea" id="RHEA-COMP:10232"/>
        <dbReference type="Rhea" id="RHEA-COMP:10233"/>
        <dbReference type="ChEBI" id="CHEBI:15378"/>
        <dbReference type="ChEBI" id="CHEBI:57856"/>
        <dbReference type="ChEBI" id="CHEBI:59789"/>
        <dbReference type="ChEBI" id="CHEBI:74411"/>
        <dbReference type="ChEBI" id="CHEBI:74493"/>
        <dbReference type="EC" id="2.1.1.182"/>
    </reaction>
</comment>
<comment type="subcellular location">
    <subcellularLocation>
        <location evidence="1">Cytoplasm</location>
    </subcellularLocation>
</comment>
<comment type="similarity">
    <text evidence="1">Belongs to the class I-like SAM-binding methyltransferase superfamily. rRNA adenine N(6)-methyltransferase family. RsmA subfamily.</text>
</comment>